<proteinExistence type="inferred from homology"/>
<name>GLMM_CAUVN</name>
<evidence type="ECO:0000255" key="1">
    <source>
        <dbReference type="HAMAP-Rule" id="MF_01554"/>
    </source>
</evidence>
<feature type="chain" id="PRO_1000185358" description="Phosphoglucosamine mutase">
    <location>
        <begin position="1"/>
        <end position="448"/>
    </location>
</feature>
<feature type="active site" description="Phosphoserine intermediate" evidence="1">
    <location>
        <position position="104"/>
    </location>
</feature>
<feature type="binding site" description="via phosphate group" evidence="1">
    <location>
        <position position="104"/>
    </location>
    <ligand>
        <name>Mg(2+)</name>
        <dbReference type="ChEBI" id="CHEBI:18420"/>
    </ligand>
</feature>
<feature type="binding site" evidence="1">
    <location>
        <position position="245"/>
    </location>
    <ligand>
        <name>Mg(2+)</name>
        <dbReference type="ChEBI" id="CHEBI:18420"/>
    </ligand>
</feature>
<feature type="binding site" evidence="1">
    <location>
        <position position="247"/>
    </location>
    <ligand>
        <name>Mg(2+)</name>
        <dbReference type="ChEBI" id="CHEBI:18420"/>
    </ligand>
</feature>
<feature type="binding site" evidence="1">
    <location>
        <position position="249"/>
    </location>
    <ligand>
        <name>Mg(2+)</name>
        <dbReference type="ChEBI" id="CHEBI:18420"/>
    </ligand>
</feature>
<feature type="modified residue" description="Phosphoserine" evidence="1">
    <location>
        <position position="104"/>
    </location>
</feature>
<accession>B8GXK7</accession>
<sequence>MSKRAYFGTDGIRGQANKHPMTAEVALRVGLAAGKLFRSQDERRHLVVIGKDTRLSGYMIEPALVAGLTSVGLDVRLFGPLPTPAVAMMTRSMRADLGIMISASHNSFADNGIKLFGPDGYKLSDAQELGIEALMDQGLQEGLAAPRELGRVKRIDDAQARYVEIVKATFPRHLNLSGLRIVIDCANGAAYKVAPTALYELGAEVITLGVSPDGTNINEECGSTHPEAMAKMVREYRADIGIALDGDADRLVICDEKGVVVDGDQIMAIIAAASHKAGTLKGGGVVATVMSNLGLERQLNTMGLSLERTAVGDRYVMQRMREGGFNVGGEQSGHLILSDFSTTGDGLIAALQVLAVMVETDKPMSALGRQFEPVPQLLENVRFVGGKPLEAAAVKEAIADGEAQLNGAGRIVVRASGTEPLIRIMAEGDDPALVKKVVKSIASAVKAA</sequence>
<protein>
    <recommendedName>
        <fullName evidence="1">Phosphoglucosamine mutase</fullName>
        <ecNumber evidence="1">5.4.2.10</ecNumber>
    </recommendedName>
</protein>
<organism>
    <name type="scientific">Caulobacter vibrioides (strain NA1000 / CB15N)</name>
    <name type="common">Caulobacter crescentus</name>
    <dbReference type="NCBI Taxonomy" id="565050"/>
    <lineage>
        <taxon>Bacteria</taxon>
        <taxon>Pseudomonadati</taxon>
        <taxon>Pseudomonadota</taxon>
        <taxon>Alphaproteobacteria</taxon>
        <taxon>Caulobacterales</taxon>
        <taxon>Caulobacteraceae</taxon>
        <taxon>Caulobacter</taxon>
    </lineage>
</organism>
<gene>
    <name evidence="1" type="primary">glmM</name>
    <name type="ordered locus">CCNA_00116</name>
</gene>
<dbReference type="EC" id="5.4.2.10" evidence="1"/>
<dbReference type="EMBL" id="CP001340">
    <property type="protein sequence ID" value="ACL93583.1"/>
    <property type="molecule type" value="Genomic_DNA"/>
</dbReference>
<dbReference type="RefSeq" id="WP_010918006.1">
    <property type="nucleotide sequence ID" value="NC_011916.1"/>
</dbReference>
<dbReference type="RefSeq" id="YP_002515491.1">
    <property type="nucleotide sequence ID" value="NC_011916.1"/>
</dbReference>
<dbReference type="SMR" id="B8GXK7"/>
<dbReference type="GeneID" id="7332370"/>
<dbReference type="KEGG" id="ccs:CCNA_00116"/>
<dbReference type="PATRIC" id="fig|565050.3.peg.115"/>
<dbReference type="HOGENOM" id="CLU_016950_7_0_5"/>
<dbReference type="OrthoDB" id="9803322at2"/>
<dbReference type="PhylomeDB" id="B8GXK7"/>
<dbReference type="Proteomes" id="UP000001364">
    <property type="component" value="Chromosome"/>
</dbReference>
<dbReference type="GO" id="GO:0005829">
    <property type="term" value="C:cytosol"/>
    <property type="evidence" value="ECO:0007669"/>
    <property type="project" value="TreeGrafter"/>
</dbReference>
<dbReference type="GO" id="GO:0000287">
    <property type="term" value="F:magnesium ion binding"/>
    <property type="evidence" value="ECO:0007669"/>
    <property type="project" value="UniProtKB-UniRule"/>
</dbReference>
<dbReference type="GO" id="GO:0008966">
    <property type="term" value="F:phosphoglucosamine mutase activity"/>
    <property type="evidence" value="ECO:0007669"/>
    <property type="project" value="UniProtKB-UniRule"/>
</dbReference>
<dbReference type="GO" id="GO:0004615">
    <property type="term" value="F:phosphomannomutase activity"/>
    <property type="evidence" value="ECO:0007669"/>
    <property type="project" value="TreeGrafter"/>
</dbReference>
<dbReference type="GO" id="GO:0005975">
    <property type="term" value="P:carbohydrate metabolic process"/>
    <property type="evidence" value="ECO:0007669"/>
    <property type="project" value="InterPro"/>
</dbReference>
<dbReference type="GO" id="GO:0009252">
    <property type="term" value="P:peptidoglycan biosynthetic process"/>
    <property type="evidence" value="ECO:0007669"/>
    <property type="project" value="TreeGrafter"/>
</dbReference>
<dbReference type="GO" id="GO:0006048">
    <property type="term" value="P:UDP-N-acetylglucosamine biosynthetic process"/>
    <property type="evidence" value="ECO:0007669"/>
    <property type="project" value="TreeGrafter"/>
</dbReference>
<dbReference type="CDD" id="cd05802">
    <property type="entry name" value="GlmM"/>
    <property type="match status" value="1"/>
</dbReference>
<dbReference type="FunFam" id="3.30.310.50:FF:000001">
    <property type="entry name" value="Phosphoglucosamine mutase"/>
    <property type="match status" value="1"/>
</dbReference>
<dbReference type="FunFam" id="3.40.120.10:FF:000001">
    <property type="entry name" value="Phosphoglucosamine mutase"/>
    <property type="match status" value="1"/>
</dbReference>
<dbReference type="FunFam" id="3.40.120.10:FF:000003">
    <property type="entry name" value="Phosphoglucosamine mutase"/>
    <property type="match status" value="1"/>
</dbReference>
<dbReference type="Gene3D" id="3.40.120.10">
    <property type="entry name" value="Alpha-D-Glucose-1,6-Bisphosphate, subunit A, domain 3"/>
    <property type="match status" value="3"/>
</dbReference>
<dbReference type="Gene3D" id="3.30.310.50">
    <property type="entry name" value="Alpha-D-phosphohexomutase, C-terminal domain"/>
    <property type="match status" value="1"/>
</dbReference>
<dbReference type="HAMAP" id="MF_01554_B">
    <property type="entry name" value="GlmM_B"/>
    <property type="match status" value="1"/>
</dbReference>
<dbReference type="InterPro" id="IPR005844">
    <property type="entry name" value="A-D-PHexomutase_a/b/a-I"/>
</dbReference>
<dbReference type="InterPro" id="IPR016055">
    <property type="entry name" value="A-D-PHexomutase_a/b/a-I/II/III"/>
</dbReference>
<dbReference type="InterPro" id="IPR005845">
    <property type="entry name" value="A-D-PHexomutase_a/b/a-II"/>
</dbReference>
<dbReference type="InterPro" id="IPR005846">
    <property type="entry name" value="A-D-PHexomutase_a/b/a-III"/>
</dbReference>
<dbReference type="InterPro" id="IPR005843">
    <property type="entry name" value="A-D-PHexomutase_C"/>
</dbReference>
<dbReference type="InterPro" id="IPR036900">
    <property type="entry name" value="A-D-PHexomutase_C_sf"/>
</dbReference>
<dbReference type="InterPro" id="IPR005841">
    <property type="entry name" value="Alpha-D-phosphohexomutase_SF"/>
</dbReference>
<dbReference type="InterPro" id="IPR006352">
    <property type="entry name" value="GlmM_bact"/>
</dbReference>
<dbReference type="InterPro" id="IPR050060">
    <property type="entry name" value="Phosphoglucosamine_mutase"/>
</dbReference>
<dbReference type="NCBIfam" id="TIGR01455">
    <property type="entry name" value="glmM"/>
    <property type="match status" value="1"/>
</dbReference>
<dbReference type="NCBIfam" id="NF008139">
    <property type="entry name" value="PRK10887.1"/>
    <property type="match status" value="1"/>
</dbReference>
<dbReference type="PANTHER" id="PTHR42946:SF1">
    <property type="entry name" value="PHOSPHOGLUCOMUTASE (ALPHA-D-GLUCOSE-1,6-BISPHOSPHATE-DEPENDENT)"/>
    <property type="match status" value="1"/>
</dbReference>
<dbReference type="PANTHER" id="PTHR42946">
    <property type="entry name" value="PHOSPHOHEXOSE MUTASE"/>
    <property type="match status" value="1"/>
</dbReference>
<dbReference type="Pfam" id="PF02878">
    <property type="entry name" value="PGM_PMM_I"/>
    <property type="match status" value="1"/>
</dbReference>
<dbReference type="Pfam" id="PF02879">
    <property type="entry name" value="PGM_PMM_II"/>
    <property type="match status" value="1"/>
</dbReference>
<dbReference type="Pfam" id="PF02880">
    <property type="entry name" value="PGM_PMM_III"/>
    <property type="match status" value="1"/>
</dbReference>
<dbReference type="Pfam" id="PF00408">
    <property type="entry name" value="PGM_PMM_IV"/>
    <property type="match status" value="1"/>
</dbReference>
<dbReference type="PRINTS" id="PR00509">
    <property type="entry name" value="PGMPMM"/>
</dbReference>
<dbReference type="SUPFAM" id="SSF55957">
    <property type="entry name" value="Phosphoglucomutase, C-terminal domain"/>
    <property type="match status" value="1"/>
</dbReference>
<dbReference type="SUPFAM" id="SSF53738">
    <property type="entry name" value="Phosphoglucomutase, first 3 domains"/>
    <property type="match status" value="3"/>
</dbReference>
<comment type="function">
    <text evidence="1">Catalyzes the conversion of glucosamine-6-phosphate to glucosamine-1-phosphate.</text>
</comment>
<comment type="catalytic activity">
    <reaction evidence="1">
        <text>alpha-D-glucosamine 1-phosphate = D-glucosamine 6-phosphate</text>
        <dbReference type="Rhea" id="RHEA:23424"/>
        <dbReference type="ChEBI" id="CHEBI:58516"/>
        <dbReference type="ChEBI" id="CHEBI:58725"/>
        <dbReference type="EC" id="5.4.2.10"/>
    </reaction>
</comment>
<comment type="cofactor">
    <cofactor evidence="1">
        <name>Mg(2+)</name>
        <dbReference type="ChEBI" id="CHEBI:18420"/>
    </cofactor>
    <text evidence="1">Binds 1 Mg(2+) ion per subunit.</text>
</comment>
<comment type="PTM">
    <text evidence="1">Activated by phosphorylation.</text>
</comment>
<comment type="similarity">
    <text evidence="1">Belongs to the phosphohexose mutase family.</text>
</comment>
<reference key="1">
    <citation type="journal article" date="2010" name="J. Bacteriol.">
        <title>The genetic basis of laboratory adaptation in Caulobacter crescentus.</title>
        <authorList>
            <person name="Marks M.E."/>
            <person name="Castro-Rojas C.M."/>
            <person name="Teiling C."/>
            <person name="Du L."/>
            <person name="Kapatral V."/>
            <person name="Walunas T.L."/>
            <person name="Crosson S."/>
        </authorList>
    </citation>
    <scope>NUCLEOTIDE SEQUENCE [LARGE SCALE GENOMIC DNA]</scope>
    <source>
        <strain>NA1000 / CB15N</strain>
    </source>
</reference>
<keyword id="KW-0413">Isomerase</keyword>
<keyword id="KW-0460">Magnesium</keyword>
<keyword id="KW-0479">Metal-binding</keyword>
<keyword id="KW-0597">Phosphoprotein</keyword>
<keyword id="KW-1185">Reference proteome</keyword>